<sequence length="172" mass="18728">MSLPNPAELIRQMAVDLRAHLARRHISEPRYIGIRTGGVWVAQALQEAMGDTSPMGTLDVSFYRDDFSQNGLHPQVRPSELPFEVEGQHLVLVDDVLMSGRTIRAALNELFDYGRPASVTLVCLLDLDAGELPIRPNVLGATLSLAAHERVKLTGPAPLALERQDLASASAL</sequence>
<proteinExistence type="inferred from homology"/>
<reference key="1">
    <citation type="submission" date="2008-01" db="EMBL/GenBank/DDBJ databases">
        <title>Complete sequence of Pseudomonas putida GB-1.</title>
        <authorList>
            <consortium name="US DOE Joint Genome Institute"/>
            <person name="Copeland A."/>
            <person name="Lucas S."/>
            <person name="Lapidus A."/>
            <person name="Barry K."/>
            <person name="Glavina del Rio T."/>
            <person name="Dalin E."/>
            <person name="Tice H."/>
            <person name="Pitluck S."/>
            <person name="Bruce D."/>
            <person name="Goodwin L."/>
            <person name="Chertkov O."/>
            <person name="Brettin T."/>
            <person name="Detter J.C."/>
            <person name="Han C."/>
            <person name="Kuske C.R."/>
            <person name="Schmutz J."/>
            <person name="Larimer F."/>
            <person name="Land M."/>
            <person name="Hauser L."/>
            <person name="Kyrpides N."/>
            <person name="Kim E."/>
            <person name="McCarthy J.K."/>
            <person name="Richardson P."/>
        </authorList>
    </citation>
    <scope>NUCLEOTIDE SEQUENCE [LARGE SCALE GENOMIC DNA]</scope>
    <source>
        <strain>GB-1</strain>
    </source>
</reference>
<protein>
    <recommendedName>
        <fullName evidence="1">Bifunctional protein PyrR</fullName>
    </recommendedName>
    <domain>
        <recommendedName>
            <fullName evidence="1">Pyrimidine operon regulatory protein</fullName>
        </recommendedName>
    </domain>
    <domain>
        <recommendedName>
            <fullName evidence="1">Uracil phosphoribosyltransferase</fullName>
            <shortName evidence="1">UPRTase</shortName>
            <ecNumber evidence="1">2.4.2.9</ecNumber>
        </recommendedName>
    </domain>
</protein>
<gene>
    <name evidence="1" type="primary">pyrR</name>
    <name type="ordered locus">PputGB1_5047</name>
</gene>
<keyword id="KW-0328">Glycosyltransferase</keyword>
<keyword id="KW-0804">Transcription</keyword>
<keyword id="KW-0805">Transcription regulation</keyword>
<keyword id="KW-0808">Transferase</keyword>
<organism>
    <name type="scientific">Pseudomonas putida (strain GB-1)</name>
    <dbReference type="NCBI Taxonomy" id="76869"/>
    <lineage>
        <taxon>Bacteria</taxon>
        <taxon>Pseudomonadati</taxon>
        <taxon>Pseudomonadota</taxon>
        <taxon>Gammaproteobacteria</taxon>
        <taxon>Pseudomonadales</taxon>
        <taxon>Pseudomonadaceae</taxon>
        <taxon>Pseudomonas</taxon>
    </lineage>
</organism>
<name>PYRR_PSEPG</name>
<evidence type="ECO:0000255" key="1">
    <source>
        <dbReference type="HAMAP-Rule" id="MF_01219"/>
    </source>
</evidence>
<feature type="chain" id="PRO_1000085654" description="Bifunctional protein PyrR">
    <location>
        <begin position="1"/>
        <end position="172"/>
    </location>
</feature>
<feature type="short sequence motif" description="PRPP-binding" evidence="1">
    <location>
        <begin position="90"/>
        <end position="102"/>
    </location>
</feature>
<comment type="function">
    <text evidence="1">Regulates the transcription of the pyrimidine nucleotide (pyr) operon in response to exogenous pyrimidines.</text>
</comment>
<comment type="function">
    <text evidence="1">Also displays a weak uracil phosphoribosyltransferase activity which is not physiologically significant.</text>
</comment>
<comment type="catalytic activity">
    <reaction evidence="1">
        <text>UMP + diphosphate = 5-phospho-alpha-D-ribose 1-diphosphate + uracil</text>
        <dbReference type="Rhea" id="RHEA:13017"/>
        <dbReference type="ChEBI" id="CHEBI:17568"/>
        <dbReference type="ChEBI" id="CHEBI:33019"/>
        <dbReference type="ChEBI" id="CHEBI:57865"/>
        <dbReference type="ChEBI" id="CHEBI:58017"/>
        <dbReference type="EC" id="2.4.2.9"/>
    </reaction>
</comment>
<comment type="similarity">
    <text evidence="1">Belongs to the purine/pyrimidine phosphoribosyltransferase family. PyrR subfamily.</text>
</comment>
<dbReference type="EC" id="2.4.2.9" evidence="1"/>
<dbReference type="EMBL" id="CP000926">
    <property type="protein sequence ID" value="ABZ00932.1"/>
    <property type="molecule type" value="Genomic_DNA"/>
</dbReference>
<dbReference type="RefSeq" id="WP_012274556.1">
    <property type="nucleotide sequence ID" value="NC_010322.1"/>
</dbReference>
<dbReference type="SMR" id="B0KM22"/>
<dbReference type="KEGG" id="ppg:PputGB1_5047"/>
<dbReference type="eggNOG" id="COG2065">
    <property type="taxonomic scope" value="Bacteria"/>
</dbReference>
<dbReference type="HOGENOM" id="CLU_094234_1_1_6"/>
<dbReference type="Proteomes" id="UP000002157">
    <property type="component" value="Chromosome"/>
</dbReference>
<dbReference type="GO" id="GO:0004845">
    <property type="term" value="F:uracil phosphoribosyltransferase activity"/>
    <property type="evidence" value="ECO:0007669"/>
    <property type="project" value="UniProtKB-UniRule"/>
</dbReference>
<dbReference type="GO" id="GO:0006355">
    <property type="term" value="P:regulation of DNA-templated transcription"/>
    <property type="evidence" value="ECO:0007669"/>
    <property type="project" value="UniProtKB-UniRule"/>
</dbReference>
<dbReference type="CDD" id="cd06223">
    <property type="entry name" value="PRTases_typeI"/>
    <property type="match status" value="1"/>
</dbReference>
<dbReference type="Gene3D" id="3.40.50.2020">
    <property type="match status" value="1"/>
</dbReference>
<dbReference type="HAMAP" id="MF_01219">
    <property type="entry name" value="PyrR"/>
    <property type="match status" value="1"/>
</dbReference>
<dbReference type="InterPro" id="IPR000836">
    <property type="entry name" value="PRibTrfase_dom"/>
</dbReference>
<dbReference type="InterPro" id="IPR029057">
    <property type="entry name" value="PRTase-like"/>
</dbReference>
<dbReference type="InterPro" id="IPR023050">
    <property type="entry name" value="PyrR"/>
</dbReference>
<dbReference type="InterPro" id="IPR050137">
    <property type="entry name" value="PyrR_bifunctional"/>
</dbReference>
<dbReference type="NCBIfam" id="NF003545">
    <property type="entry name" value="PRK05205.1-1"/>
    <property type="match status" value="1"/>
</dbReference>
<dbReference type="PANTHER" id="PTHR11608">
    <property type="entry name" value="BIFUNCTIONAL PROTEIN PYRR"/>
    <property type="match status" value="1"/>
</dbReference>
<dbReference type="PANTHER" id="PTHR11608:SF0">
    <property type="entry name" value="BIFUNCTIONAL PROTEIN PYRR"/>
    <property type="match status" value="1"/>
</dbReference>
<dbReference type="Pfam" id="PF00156">
    <property type="entry name" value="Pribosyltran"/>
    <property type="match status" value="1"/>
</dbReference>
<dbReference type="SUPFAM" id="SSF53271">
    <property type="entry name" value="PRTase-like"/>
    <property type="match status" value="1"/>
</dbReference>
<accession>B0KM22</accession>